<organism>
    <name type="scientific">Schizosaccharomyces pombe (strain 972 / ATCC 24843)</name>
    <name type="common">Fission yeast</name>
    <dbReference type="NCBI Taxonomy" id="284812"/>
    <lineage>
        <taxon>Eukaryota</taxon>
        <taxon>Fungi</taxon>
        <taxon>Dikarya</taxon>
        <taxon>Ascomycota</taxon>
        <taxon>Taphrinomycotina</taxon>
        <taxon>Schizosaccharomycetes</taxon>
        <taxon>Schizosaccharomycetales</taxon>
        <taxon>Schizosaccharomycetaceae</taxon>
        <taxon>Schizosaccharomyces</taxon>
    </lineage>
</organism>
<sequence length="51" mass="5418">MAQTFQEKQQSRRIKMSTGNFFSRMWNAVVFGFGAAIGASVANAALGACCG</sequence>
<proteinExistence type="predicted"/>
<name>YND9_SCHPO</name>
<evidence type="ECO:0000255" key="1"/>
<evidence type="ECO:0000305" key="2"/>
<gene>
    <name type="ORF">SPBC30B4.09</name>
</gene>
<comment type="subcellular location">
    <subcellularLocation>
        <location evidence="2">Membrane</location>
        <topology evidence="2">Single-pass membrane protein</topology>
    </subcellularLocation>
</comment>
<dbReference type="EMBL" id="CU329671">
    <property type="protein sequence ID" value="CCD31359.1"/>
    <property type="molecule type" value="Genomic_DNA"/>
</dbReference>
<dbReference type="RefSeq" id="XP_004001706.1">
    <property type="nucleotide sequence ID" value="XM_004001657.1"/>
</dbReference>
<dbReference type="SMR" id="G2TRP1"/>
<dbReference type="BioGRID" id="4254119">
    <property type="interactions" value="4"/>
</dbReference>
<dbReference type="STRING" id="284812.G2TRP1"/>
<dbReference type="iPTMnet" id="G2TRP1"/>
<dbReference type="PaxDb" id="4896-SPBC30B4.09.1"/>
<dbReference type="EnsemblFungi" id="SPBC30B4.09.1">
    <property type="protein sequence ID" value="SPBC30B4.09.1:pep"/>
    <property type="gene ID" value="SPBC30B4.09"/>
</dbReference>
<dbReference type="PomBase" id="SPBC30B4.09"/>
<dbReference type="VEuPathDB" id="FungiDB:SPBC30B4.09"/>
<dbReference type="HOGENOM" id="CLU_3107712_0_0_1"/>
<dbReference type="InParanoid" id="G2TRP1"/>
<dbReference type="PRO" id="PR:G2TRP1"/>
<dbReference type="Proteomes" id="UP000002485">
    <property type="component" value="Chromosome II"/>
</dbReference>
<dbReference type="GO" id="GO:0016020">
    <property type="term" value="C:membrane"/>
    <property type="evidence" value="ECO:0007669"/>
    <property type="project" value="UniProtKB-SubCell"/>
</dbReference>
<reference key="1">
    <citation type="journal article" date="2002" name="Nature">
        <title>The genome sequence of Schizosaccharomyces pombe.</title>
        <authorList>
            <person name="Wood V."/>
            <person name="Gwilliam R."/>
            <person name="Rajandream M.A."/>
            <person name="Lyne M.H."/>
            <person name="Lyne R."/>
            <person name="Stewart A."/>
            <person name="Sgouros J.G."/>
            <person name="Peat N."/>
            <person name="Hayles J."/>
            <person name="Baker S.G."/>
            <person name="Basham D."/>
            <person name="Bowman S."/>
            <person name="Brooks K."/>
            <person name="Brown D."/>
            <person name="Brown S."/>
            <person name="Chillingworth T."/>
            <person name="Churcher C.M."/>
            <person name="Collins M."/>
            <person name="Connor R."/>
            <person name="Cronin A."/>
            <person name="Davis P."/>
            <person name="Feltwell T."/>
            <person name="Fraser A."/>
            <person name="Gentles S."/>
            <person name="Goble A."/>
            <person name="Hamlin N."/>
            <person name="Harris D.E."/>
            <person name="Hidalgo J."/>
            <person name="Hodgson G."/>
            <person name="Holroyd S."/>
            <person name="Hornsby T."/>
            <person name="Howarth S."/>
            <person name="Huckle E.J."/>
            <person name="Hunt S."/>
            <person name="Jagels K."/>
            <person name="James K.D."/>
            <person name="Jones L."/>
            <person name="Jones M."/>
            <person name="Leather S."/>
            <person name="McDonald S."/>
            <person name="McLean J."/>
            <person name="Mooney P."/>
            <person name="Moule S."/>
            <person name="Mungall K.L."/>
            <person name="Murphy L.D."/>
            <person name="Niblett D."/>
            <person name="Odell C."/>
            <person name="Oliver K."/>
            <person name="O'Neil S."/>
            <person name="Pearson D."/>
            <person name="Quail M.A."/>
            <person name="Rabbinowitsch E."/>
            <person name="Rutherford K.M."/>
            <person name="Rutter S."/>
            <person name="Saunders D."/>
            <person name="Seeger K."/>
            <person name="Sharp S."/>
            <person name="Skelton J."/>
            <person name="Simmonds M.N."/>
            <person name="Squares R."/>
            <person name="Squares S."/>
            <person name="Stevens K."/>
            <person name="Taylor K."/>
            <person name="Taylor R.G."/>
            <person name="Tivey A."/>
            <person name="Walsh S.V."/>
            <person name="Warren T."/>
            <person name="Whitehead S."/>
            <person name="Woodward J.R."/>
            <person name="Volckaert G."/>
            <person name="Aert R."/>
            <person name="Robben J."/>
            <person name="Grymonprez B."/>
            <person name="Weltjens I."/>
            <person name="Vanstreels E."/>
            <person name="Rieger M."/>
            <person name="Schaefer M."/>
            <person name="Mueller-Auer S."/>
            <person name="Gabel C."/>
            <person name="Fuchs M."/>
            <person name="Duesterhoeft A."/>
            <person name="Fritzc C."/>
            <person name="Holzer E."/>
            <person name="Moestl D."/>
            <person name="Hilbert H."/>
            <person name="Borzym K."/>
            <person name="Langer I."/>
            <person name="Beck A."/>
            <person name="Lehrach H."/>
            <person name="Reinhardt R."/>
            <person name="Pohl T.M."/>
            <person name="Eger P."/>
            <person name="Zimmermann W."/>
            <person name="Wedler H."/>
            <person name="Wambutt R."/>
            <person name="Purnelle B."/>
            <person name="Goffeau A."/>
            <person name="Cadieu E."/>
            <person name="Dreano S."/>
            <person name="Gloux S."/>
            <person name="Lelaure V."/>
            <person name="Mottier S."/>
            <person name="Galibert F."/>
            <person name="Aves S.J."/>
            <person name="Xiang Z."/>
            <person name="Hunt C."/>
            <person name="Moore K."/>
            <person name="Hurst S.M."/>
            <person name="Lucas M."/>
            <person name="Rochet M."/>
            <person name="Gaillardin C."/>
            <person name="Tallada V.A."/>
            <person name="Garzon A."/>
            <person name="Thode G."/>
            <person name="Daga R.R."/>
            <person name="Cruzado L."/>
            <person name="Jimenez J."/>
            <person name="Sanchez M."/>
            <person name="del Rey F."/>
            <person name="Benito J."/>
            <person name="Dominguez A."/>
            <person name="Revuelta J.L."/>
            <person name="Moreno S."/>
            <person name="Armstrong J."/>
            <person name="Forsburg S.L."/>
            <person name="Cerutti L."/>
            <person name="Lowe T."/>
            <person name="McCombie W.R."/>
            <person name="Paulsen I."/>
            <person name="Potashkin J."/>
            <person name="Shpakovski G.V."/>
            <person name="Ussery D."/>
            <person name="Barrell B.G."/>
            <person name="Nurse P."/>
        </authorList>
    </citation>
    <scope>NUCLEOTIDE SEQUENCE [LARGE SCALE GENOMIC DNA]</scope>
    <source>
        <strain>972 / ATCC 24843</strain>
    </source>
</reference>
<reference key="2">
    <citation type="journal article" date="2011" name="Science">
        <title>Comparative functional genomics of the fission yeasts.</title>
        <authorList>
            <person name="Rhind N."/>
            <person name="Chen Z."/>
            <person name="Yassour M."/>
            <person name="Thompson D.A."/>
            <person name="Haas B.J."/>
            <person name="Habib N."/>
            <person name="Wapinski I."/>
            <person name="Roy S."/>
            <person name="Lin M.F."/>
            <person name="Heiman D.I."/>
            <person name="Young S.K."/>
            <person name="Furuya K."/>
            <person name="Guo Y."/>
            <person name="Pidoux A."/>
            <person name="Chen H.M."/>
            <person name="Robbertse B."/>
            <person name="Goldberg J.M."/>
            <person name="Aoki K."/>
            <person name="Bayne E.H."/>
            <person name="Berlin A.M."/>
            <person name="Desjardins C.A."/>
            <person name="Dobbs E."/>
            <person name="Dukaj L."/>
            <person name="Fan L."/>
            <person name="FitzGerald M.G."/>
            <person name="French C."/>
            <person name="Gujja S."/>
            <person name="Hansen K."/>
            <person name="Keifenheim D."/>
            <person name="Levin J.Z."/>
            <person name="Mosher R.A."/>
            <person name="Mueller C.A."/>
            <person name="Pfiffner J."/>
            <person name="Priest M."/>
            <person name="Russ C."/>
            <person name="Smialowska A."/>
            <person name="Swoboda P."/>
            <person name="Sykes S.M."/>
            <person name="Vaughn M."/>
            <person name="Vengrova S."/>
            <person name="Yoder R."/>
            <person name="Zeng Q."/>
            <person name="Allshire R."/>
            <person name="Baulcombe D."/>
            <person name="Birren B.W."/>
            <person name="Brown W."/>
            <person name="Ekwall K."/>
            <person name="Kellis M."/>
            <person name="Leatherwood J."/>
            <person name="Levin H."/>
            <person name="Margalit H."/>
            <person name="Martienssen R."/>
            <person name="Nieduszynski C.A."/>
            <person name="Spatafora J.W."/>
            <person name="Friedman N."/>
            <person name="Dalgaard J.Z."/>
            <person name="Baumann P."/>
            <person name="Niki H."/>
            <person name="Regev A."/>
            <person name="Nusbaum C."/>
        </authorList>
    </citation>
    <scope>IDENTIFICATION</scope>
</reference>
<feature type="chain" id="PRO_0000416657" description="Putative uncharacterized protein C30B4.09">
    <location>
        <begin position="1"/>
        <end position="51"/>
    </location>
</feature>
<feature type="transmembrane region" description="Helical" evidence="1">
    <location>
        <begin position="20"/>
        <end position="42"/>
    </location>
</feature>
<accession>G2TRP1</accession>
<protein>
    <recommendedName>
        <fullName>Putative uncharacterized protein C30B4.09</fullName>
    </recommendedName>
</protein>
<keyword id="KW-0472">Membrane</keyword>
<keyword id="KW-1185">Reference proteome</keyword>
<keyword id="KW-0812">Transmembrane</keyword>
<keyword id="KW-1133">Transmembrane helix</keyword>